<comment type="function">
    <text evidence="1">Required for insertion of 4Fe-4S clusters for at least IspG.</text>
</comment>
<comment type="cofactor">
    <cofactor evidence="1">
        <name>iron-sulfur cluster</name>
        <dbReference type="ChEBI" id="CHEBI:30408"/>
    </cofactor>
    <text evidence="1">Binds 1 iron-sulfur cluster per subunit.</text>
</comment>
<comment type="subunit">
    <text evidence="1">Homodimer.</text>
</comment>
<comment type="similarity">
    <text evidence="1">Belongs to the HesB/IscA family.</text>
</comment>
<organism>
    <name type="scientific">Shewanella putrefaciens (strain CN-32 / ATCC BAA-453)</name>
    <dbReference type="NCBI Taxonomy" id="319224"/>
    <lineage>
        <taxon>Bacteria</taxon>
        <taxon>Pseudomonadati</taxon>
        <taxon>Pseudomonadota</taxon>
        <taxon>Gammaproteobacteria</taxon>
        <taxon>Alteromonadales</taxon>
        <taxon>Shewanellaceae</taxon>
        <taxon>Shewanella</taxon>
    </lineage>
</organism>
<reference key="1">
    <citation type="submission" date="2007-04" db="EMBL/GenBank/DDBJ databases">
        <title>Complete sequence of Shewanella putrefaciens CN-32.</title>
        <authorList>
            <consortium name="US DOE Joint Genome Institute"/>
            <person name="Copeland A."/>
            <person name="Lucas S."/>
            <person name="Lapidus A."/>
            <person name="Barry K."/>
            <person name="Detter J.C."/>
            <person name="Glavina del Rio T."/>
            <person name="Hammon N."/>
            <person name="Israni S."/>
            <person name="Dalin E."/>
            <person name="Tice H."/>
            <person name="Pitluck S."/>
            <person name="Chain P."/>
            <person name="Malfatti S."/>
            <person name="Shin M."/>
            <person name="Vergez L."/>
            <person name="Schmutz J."/>
            <person name="Larimer F."/>
            <person name="Land M."/>
            <person name="Hauser L."/>
            <person name="Kyrpides N."/>
            <person name="Mikhailova N."/>
            <person name="Romine M.F."/>
            <person name="Fredrickson J."/>
            <person name="Tiedje J."/>
            <person name="Richardson P."/>
        </authorList>
    </citation>
    <scope>NUCLEOTIDE SEQUENCE [LARGE SCALE GENOMIC DNA]</scope>
    <source>
        <strain>CN-32 / ATCC BAA-453</strain>
    </source>
</reference>
<dbReference type="EMBL" id="CP000681">
    <property type="protein sequence ID" value="ABP74851.1"/>
    <property type="molecule type" value="Genomic_DNA"/>
</dbReference>
<dbReference type="SMR" id="A4Y4G8"/>
<dbReference type="STRING" id="319224.Sputcn32_1123"/>
<dbReference type="KEGG" id="spc:Sputcn32_1123"/>
<dbReference type="eggNOG" id="COG0316">
    <property type="taxonomic scope" value="Bacteria"/>
</dbReference>
<dbReference type="HOGENOM" id="CLU_069054_5_3_6"/>
<dbReference type="GO" id="GO:0005829">
    <property type="term" value="C:cytosol"/>
    <property type="evidence" value="ECO:0007669"/>
    <property type="project" value="TreeGrafter"/>
</dbReference>
<dbReference type="GO" id="GO:0051537">
    <property type="term" value="F:2 iron, 2 sulfur cluster binding"/>
    <property type="evidence" value="ECO:0007669"/>
    <property type="project" value="TreeGrafter"/>
</dbReference>
<dbReference type="GO" id="GO:0051539">
    <property type="term" value="F:4 iron, 4 sulfur cluster binding"/>
    <property type="evidence" value="ECO:0007669"/>
    <property type="project" value="TreeGrafter"/>
</dbReference>
<dbReference type="GO" id="GO:0005506">
    <property type="term" value="F:iron ion binding"/>
    <property type="evidence" value="ECO:0007669"/>
    <property type="project" value="UniProtKB-UniRule"/>
</dbReference>
<dbReference type="GO" id="GO:0016226">
    <property type="term" value="P:iron-sulfur cluster assembly"/>
    <property type="evidence" value="ECO:0007669"/>
    <property type="project" value="UniProtKB-UniRule"/>
</dbReference>
<dbReference type="FunFam" id="2.60.300.12:FF:000002">
    <property type="entry name" value="Iron-sulfur cluster insertion protein ErpA"/>
    <property type="match status" value="1"/>
</dbReference>
<dbReference type="Gene3D" id="2.60.300.12">
    <property type="entry name" value="HesB-like domain"/>
    <property type="match status" value="1"/>
</dbReference>
<dbReference type="HAMAP" id="MF_01380">
    <property type="entry name" value="Fe_S_insert_ErpA"/>
    <property type="match status" value="1"/>
</dbReference>
<dbReference type="InterPro" id="IPR000361">
    <property type="entry name" value="FeS_biogenesis"/>
</dbReference>
<dbReference type="InterPro" id="IPR016092">
    <property type="entry name" value="FeS_cluster_insertion"/>
</dbReference>
<dbReference type="InterPro" id="IPR017870">
    <property type="entry name" value="FeS_cluster_insertion_CS"/>
</dbReference>
<dbReference type="InterPro" id="IPR023063">
    <property type="entry name" value="FeS_cluster_insertion_RrpA"/>
</dbReference>
<dbReference type="InterPro" id="IPR035903">
    <property type="entry name" value="HesB-like_dom_sf"/>
</dbReference>
<dbReference type="NCBIfam" id="TIGR00049">
    <property type="entry name" value="iron-sulfur cluster assembly accessory protein"/>
    <property type="match status" value="1"/>
</dbReference>
<dbReference type="NCBIfam" id="NF010147">
    <property type="entry name" value="PRK13623.1"/>
    <property type="match status" value="1"/>
</dbReference>
<dbReference type="PANTHER" id="PTHR43011">
    <property type="entry name" value="IRON-SULFUR CLUSTER ASSEMBLY 2 HOMOLOG, MITOCHONDRIAL"/>
    <property type="match status" value="1"/>
</dbReference>
<dbReference type="PANTHER" id="PTHR43011:SF1">
    <property type="entry name" value="IRON-SULFUR CLUSTER ASSEMBLY 2 HOMOLOG, MITOCHONDRIAL"/>
    <property type="match status" value="1"/>
</dbReference>
<dbReference type="Pfam" id="PF01521">
    <property type="entry name" value="Fe-S_biosyn"/>
    <property type="match status" value="1"/>
</dbReference>
<dbReference type="SUPFAM" id="SSF89360">
    <property type="entry name" value="HesB-like domain"/>
    <property type="match status" value="1"/>
</dbReference>
<dbReference type="PROSITE" id="PS01152">
    <property type="entry name" value="HESB"/>
    <property type="match status" value="1"/>
</dbReference>
<feature type="chain" id="PRO_0000311554" description="Iron-sulfur cluster insertion protein ErpA">
    <location>
        <begin position="1"/>
        <end position="116"/>
    </location>
</feature>
<feature type="binding site" evidence="1">
    <location>
        <position position="44"/>
    </location>
    <ligand>
        <name>iron-sulfur cluster</name>
        <dbReference type="ChEBI" id="CHEBI:30408"/>
    </ligand>
</feature>
<feature type="binding site" evidence="1">
    <location>
        <position position="108"/>
    </location>
    <ligand>
        <name>iron-sulfur cluster</name>
        <dbReference type="ChEBI" id="CHEBI:30408"/>
    </ligand>
</feature>
<feature type="binding site" evidence="1">
    <location>
        <position position="110"/>
    </location>
    <ligand>
        <name>iron-sulfur cluster</name>
        <dbReference type="ChEBI" id="CHEBI:30408"/>
    </ligand>
</feature>
<protein>
    <recommendedName>
        <fullName evidence="1">Iron-sulfur cluster insertion protein ErpA</fullName>
    </recommendedName>
</protein>
<accession>A4Y4G8</accession>
<evidence type="ECO:0000255" key="1">
    <source>
        <dbReference type="HAMAP-Rule" id="MF_01380"/>
    </source>
</evidence>
<name>ERPA_SHEPC</name>
<gene>
    <name evidence="1" type="primary">erpA</name>
    <name type="ordered locus">Sputcn32_1123</name>
</gene>
<sequence>MTEQADAAMPIQFTDAAAAKVKGLLEEEQNPALKLRVYVTGGGCSGFQYGFTFDEKVNEGDFTVEKQGVQLVVDPMSLQYLVGGEVDYTSGLEGSRFFVKNPNATTTCGCGASFSV</sequence>
<proteinExistence type="inferred from homology"/>
<keyword id="KW-0408">Iron</keyword>
<keyword id="KW-0411">Iron-sulfur</keyword>
<keyword id="KW-0479">Metal-binding</keyword>